<keyword id="KW-0687">Ribonucleoprotein</keyword>
<keyword id="KW-0689">Ribosomal protein</keyword>
<keyword id="KW-0694">RNA-binding</keyword>
<keyword id="KW-0699">rRNA-binding</keyword>
<accession>Q2W2H9</accession>
<proteinExistence type="inferred from homology"/>
<feature type="chain" id="PRO_0000234856" description="Large ribosomal subunit protein uL10">
    <location>
        <begin position="1"/>
        <end position="171"/>
    </location>
</feature>
<comment type="function">
    <text evidence="1">Forms part of the ribosomal stalk, playing a central role in the interaction of the ribosome with GTP-bound translation factors.</text>
</comment>
<comment type="subunit">
    <text evidence="1">Part of the ribosomal stalk of the 50S ribosomal subunit. The N-terminus interacts with L11 and the large rRNA to form the base of the stalk. The C-terminus forms an elongated spine to which L12 dimers bind in a sequential fashion forming a multimeric L10(L12)X complex.</text>
</comment>
<comment type="similarity">
    <text evidence="1">Belongs to the universal ribosomal protein uL10 family.</text>
</comment>
<gene>
    <name evidence="1" type="primary">rplJ</name>
    <name type="ordered locus">amb3142</name>
</gene>
<evidence type="ECO:0000255" key="1">
    <source>
        <dbReference type="HAMAP-Rule" id="MF_00362"/>
    </source>
</evidence>
<evidence type="ECO:0000305" key="2"/>
<protein>
    <recommendedName>
        <fullName evidence="1">Large ribosomal subunit protein uL10</fullName>
    </recommendedName>
    <alternativeName>
        <fullName evidence="2">50S ribosomal protein L10</fullName>
    </alternativeName>
</protein>
<sequence>MDRTQKTEWVGSLQGTLGDVGLVVVTHYSGLTVAEMTDLRGKMRAAGASFKVTKNRLTKLALAGTEFESIADLFVGPTAIAVSRDPVAAAKVVADYAKANDKLKILGGSLGSLRLDVNGVKALATLPSLDELRGKLLGMLSTPATRIAGVLQAPAGQLARVLKAKADKDAA</sequence>
<name>RL10_PARM1</name>
<reference key="1">
    <citation type="journal article" date="2005" name="DNA Res.">
        <title>Complete genome sequence of the facultative anaerobic magnetotactic bacterium Magnetospirillum sp. strain AMB-1.</title>
        <authorList>
            <person name="Matsunaga T."/>
            <person name="Okamura Y."/>
            <person name="Fukuda Y."/>
            <person name="Wahyudi A.T."/>
            <person name="Murase Y."/>
            <person name="Takeyama H."/>
        </authorList>
    </citation>
    <scope>NUCLEOTIDE SEQUENCE [LARGE SCALE GENOMIC DNA]</scope>
    <source>
        <strain>ATCC 700264 / AMB-1</strain>
    </source>
</reference>
<dbReference type="EMBL" id="AP007255">
    <property type="protein sequence ID" value="BAE51946.1"/>
    <property type="molecule type" value="Genomic_DNA"/>
</dbReference>
<dbReference type="RefSeq" id="WP_011385508.1">
    <property type="nucleotide sequence ID" value="NC_007626.1"/>
</dbReference>
<dbReference type="SMR" id="Q2W2H9"/>
<dbReference type="STRING" id="342108.amb3142"/>
<dbReference type="KEGG" id="mag:amb3142"/>
<dbReference type="HOGENOM" id="CLU_092227_0_0_5"/>
<dbReference type="OrthoDB" id="9791972at2"/>
<dbReference type="Proteomes" id="UP000007058">
    <property type="component" value="Chromosome"/>
</dbReference>
<dbReference type="GO" id="GO:0015934">
    <property type="term" value="C:large ribosomal subunit"/>
    <property type="evidence" value="ECO:0007669"/>
    <property type="project" value="InterPro"/>
</dbReference>
<dbReference type="GO" id="GO:0070180">
    <property type="term" value="F:large ribosomal subunit rRNA binding"/>
    <property type="evidence" value="ECO:0007669"/>
    <property type="project" value="UniProtKB-UniRule"/>
</dbReference>
<dbReference type="GO" id="GO:0003735">
    <property type="term" value="F:structural constituent of ribosome"/>
    <property type="evidence" value="ECO:0007669"/>
    <property type="project" value="InterPro"/>
</dbReference>
<dbReference type="GO" id="GO:0006412">
    <property type="term" value="P:translation"/>
    <property type="evidence" value="ECO:0007669"/>
    <property type="project" value="UniProtKB-UniRule"/>
</dbReference>
<dbReference type="CDD" id="cd05797">
    <property type="entry name" value="Ribosomal_L10"/>
    <property type="match status" value="1"/>
</dbReference>
<dbReference type="Gene3D" id="3.30.70.1730">
    <property type="match status" value="1"/>
</dbReference>
<dbReference type="Gene3D" id="6.10.250.290">
    <property type="match status" value="1"/>
</dbReference>
<dbReference type="HAMAP" id="MF_00362">
    <property type="entry name" value="Ribosomal_uL10"/>
    <property type="match status" value="1"/>
</dbReference>
<dbReference type="InterPro" id="IPR001790">
    <property type="entry name" value="Ribosomal_uL10"/>
</dbReference>
<dbReference type="InterPro" id="IPR043141">
    <property type="entry name" value="Ribosomal_uL10-like_sf"/>
</dbReference>
<dbReference type="InterPro" id="IPR022973">
    <property type="entry name" value="Ribosomal_uL10_bac"/>
</dbReference>
<dbReference type="InterPro" id="IPR047865">
    <property type="entry name" value="Ribosomal_uL10_bac_type"/>
</dbReference>
<dbReference type="InterPro" id="IPR002363">
    <property type="entry name" value="Ribosomal_uL10_CS_bac"/>
</dbReference>
<dbReference type="NCBIfam" id="NF000955">
    <property type="entry name" value="PRK00099.1-1"/>
    <property type="match status" value="1"/>
</dbReference>
<dbReference type="PANTHER" id="PTHR11560">
    <property type="entry name" value="39S RIBOSOMAL PROTEIN L10, MITOCHONDRIAL"/>
    <property type="match status" value="1"/>
</dbReference>
<dbReference type="Pfam" id="PF00466">
    <property type="entry name" value="Ribosomal_L10"/>
    <property type="match status" value="1"/>
</dbReference>
<dbReference type="SUPFAM" id="SSF160369">
    <property type="entry name" value="Ribosomal protein L10-like"/>
    <property type="match status" value="1"/>
</dbReference>
<dbReference type="PROSITE" id="PS01109">
    <property type="entry name" value="RIBOSOMAL_L10"/>
    <property type="match status" value="1"/>
</dbReference>
<organism>
    <name type="scientific">Paramagnetospirillum magneticum (strain ATCC 700264 / AMB-1)</name>
    <name type="common">Magnetospirillum magneticum</name>
    <dbReference type="NCBI Taxonomy" id="342108"/>
    <lineage>
        <taxon>Bacteria</taxon>
        <taxon>Pseudomonadati</taxon>
        <taxon>Pseudomonadota</taxon>
        <taxon>Alphaproteobacteria</taxon>
        <taxon>Rhodospirillales</taxon>
        <taxon>Magnetospirillaceae</taxon>
        <taxon>Paramagnetospirillum</taxon>
    </lineage>
</organism>